<proteinExistence type="inferred from homology"/>
<evidence type="ECO:0000255" key="1">
    <source>
        <dbReference type="HAMAP-Rule" id="MF_00368"/>
    </source>
</evidence>
<evidence type="ECO:0000305" key="2"/>
<keyword id="KW-1185">Reference proteome</keyword>
<keyword id="KW-0687">Ribonucleoprotein</keyword>
<keyword id="KW-0689">Ribosomal protein</keyword>
<feature type="chain" id="PRO_1000007080" description="Large ribosomal subunit protein bL12">
    <location>
        <begin position="1"/>
        <end position="123"/>
    </location>
</feature>
<dbReference type="EMBL" id="CP000507">
    <property type="protein sequence ID" value="ABL98416.1"/>
    <property type="molecule type" value="Genomic_DNA"/>
</dbReference>
<dbReference type="RefSeq" id="WP_011758327.1">
    <property type="nucleotide sequence ID" value="NC_008700.1"/>
</dbReference>
<dbReference type="SMR" id="A1S210"/>
<dbReference type="STRING" id="326297.Sama_0205"/>
<dbReference type="KEGG" id="saz:Sama_0205"/>
<dbReference type="eggNOG" id="COG0222">
    <property type="taxonomic scope" value="Bacteria"/>
</dbReference>
<dbReference type="HOGENOM" id="CLU_086499_3_2_6"/>
<dbReference type="OrthoDB" id="9811748at2"/>
<dbReference type="Proteomes" id="UP000009175">
    <property type="component" value="Chromosome"/>
</dbReference>
<dbReference type="GO" id="GO:0022625">
    <property type="term" value="C:cytosolic large ribosomal subunit"/>
    <property type="evidence" value="ECO:0007669"/>
    <property type="project" value="TreeGrafter"/>
</dbReference>
<dbReference type="GO" id="GO:0003729">
    <property type="term" value="F:mRNA binding"/>
    <property type="evidence" value="ECO:0007669"/>
    <property type="project" value="TreeGrafter"/>
</dbReference>
<dbReference type="GO" id="GO:0003735">
    <property type="term" value="F:structural constituent of ribosome"/>
    <property type="evidence" value="ECO:0007669"/>
    <property type="project" value="InterPro"/>
</dbReference>
<dbReference type="GO" id="GO:0006412">
    <property type="term" value="P:translation"/>
    <property type="evidence" value="ECO:0007669"/>
    <property type="project" value="UniProtKB-UniRule"/>
</dbReference>
<dbReference type="CDD" id="cd00387">
    <property type="entry name" value="Ribosomal_L7_L12"/>
    <property type="match status" value="1"/>
</dbReference>
<dbReference type="FunFam" id="1.20.5.710:FF:000001">
    <property type="entry name" value="50S ribosomal protein L7/L12"/>
    <property type="match status" value="1"/>
</dbReference>
<dbReference type="FunFam" id="3.30.1390.10:FF:000001">
    <property type="entry name" value="50S ribosomal protein L7/L12"/>
    <property type="match status" value="1"/>
</dbReference>
<dbReference type="Gene3D" id="3.30.1390.10">
    <property type="match status" value="1"/>
</dbReference>
<dbReference type="Gene3D" id="1.20.5.710">
    <property type="entry name" value="Single helix bin"/>
    <property type="match status" value="1"/>
</dbReference>
<dbReference type="HAMAP" id="MF_00368">
    <property type="entry name" value="Ribosomal_bL12"/>
    <property type="match status" value="1"/>
</dbReference>
<dbReference type="InterPro" id="IPR000206">
    <property type="entry name" value="Ribosomal_bL12"/>
</dbReference>
<dbReference type="InterPro" id="IPR013823">
    <property type="entry name" value="Ribosomal_bL12_C"/>
</dbReference>
<dbReference type="InterPro" id="IPR014719">
    <property type="entry name" value="Ribosomal_bL12_C/ClpS-like"/>
</dbReference>
<dbReference type="InterPro" id="IPR008932">
    <property type="entry name" value="Ribosomal_bL12_oligo"/>
</dbReference>
<dbReference type="InterPro" id="IPR036235">
    <property type="entry name" value="Ribosomal_bL12_oligo_N_sf"/>
</dbReference>
<dbReference type="NCBIfam" id="TIGR00855">
    <property type="entry name" value="L12"/>
    <property type="match status" value="1"/>
</dbReference>
<dbReference type="PANTHER" id="PTHR45987">
    <property type="entry name" value="39S RIBOSOMAL PROTEIN L12"/>
    <property type="match status" value="1"/>
</dbReference>
<dbReference type="PANTHER" id="PTHR45987:SF4">
    <property type="entry name" value="LARGE RIBOSOMAL SUBUNIT PROTEIN BL12M"/>
    <property type="match status" value="1"/>
</dbReference>
<dbReference type="Pfam" id="PF00542">
    <property type="entry name" value="Ribosomal_L12"/>
    <property type="match status" value="1"/>
</dbReference>
<dbReference type="Pfam" id="PF16320">
    <property type="entry name" value="Ribosomal_L12_N"/>
    <property type="match status" value="1"/>
</dbReference>
<dbReference type="SUPFAM" id="SSF54736">
    <property type="entry name" value="ClpS-like"/>
    <property type="match status" value="1"/>
</dbReference>
<dbReference type="SUPFAM" id="SSF48300">
    <property type="entry name" value="Ribosomal protein L7/12, oligomerisation (N-terminal) domain"/>
    <property type="match status" value="1"/>
</dbReference>
<protein>
    <recommendedName>
        <fullName evidence="1">Large ribosomal subunit protein bL12</fullName>
    </recommendedName>
    <alternativeName>
        <fullName evidence="2">50S ribosomal protein L7/L12</fullName>
    </alternativeName>
</protein>
<reference key="1">
    <citation type="submission" date="2006-12" db="EMBL/GenBank/DDBJ databases">
        <title>Complete sequence of Shewanella amazonensis SB2B.</title>
        <authorList>
            <consortium name="US DOE Joint Genome Institute"/>
            <person name="Copeland A."/>
            <person name="Lucas S."/>
            <person name="Lapidus A."/>
            <person name="Barry K."/>
            <person name="Detter J.C."/>
            <person name="Glavina del Rio T."/>
            <person name="Hammon N."/>
            <person name="Israni S."/>
            <person name="Dalin E."/>
            <person name="Tice H."/>
            <person name="Pitluck S."/>
            <person name="Munk A.C."/>
            <person name="Brettin T."/>
            <person name="Bruce D."/>
            <person name="Han C."/>
            <person name="Tapia R."/>
            <person name="Gilna P."/>
            <person name="Schmutz J."/>
            <person name="Larimer F."/>
            <person name="Land M."/>
            <person name="Hauser L."/>
            <person name="Kyrpides N."/>
            <person name="Mikhailova N."/>
            <person name="Fredrickson J."/>
            <person name="Richardson P."/>
        </authorList>
    </citation>
    <scope>NUCLEOTIDE SEQUENCE [LARGE SCALE GENOMIC DNA]</scope>
    <source>
        <strain>ATCC BAA-1098 / SB2B</strain>
    </source>
</reference>
<sequence>MSITKDQILEAFAAMSVMEVVELIEAMEEKFGVSAAAAVVAGGAADAGAAAEEKTEFDVVLTSHGDNKVGVIKAIRGATGLGLKEAKAMAEAAPVAVKEAVSKEEAEALKKELEEAGAQVEIK</sequence>
<organism>
    <name type="scientific">Shewanella amazonensis (strain ATCC BAA-1098 / SB2B)</name>
    <dbReference type="NCBI Taxonomy" id="326297"/>
    <lineage>
        <taxon>Bacteria</taxon>
        <taxon>Pseudomonadati</taxon>
        <taxon>Pseudomonadota</taxon>
        <taxon>Gammaproteobacteria</taxon>
        <taxon>Alteromonadales</taxon>
        <taxon>Shewanellaceae</taxon>
        <taxon>Shewanella</taxon>
    </lineage>
</organism>
<comment type="function">
    <text evidence="1">Forms part of the ribosomal stalk which helps the ribosome interact with GTP-bound translation factors. Is thus essential for accurate translation.</text>
</comment>
<comment type="subunit">
    <text evidence="1">Homodimer. Part of the ribosomal stalk of the 50S ribosomal subunit. Forms a multimeric L10(L12)X complex, where L10 forms an elongated spine to which 2 to 4 L12 dimers bind in a sequential fashion. Binds GTP-bound translation factors.</text>
</comment>
<comment type="similarity">
    <text evidence="1">Belongs to the bacterial ribosomal protein bL12 family.</text>
</comment>
<name>RL7_SHEAM</name>
<accession>A1S210</accession>
<gene>
    <name evidence="1" type="primary">rplL</name>
    <name type="ordered locus">Sama_0205</name>
</gene>